<feature type="signal peptide" evidence="1">
    <location>
        <begin position="1"/>
        <end position="22"/>
    </location>
</feature>
<feature type="chain" id="PRO_0000281627" description="LPS-assembly protein LptD">
    <location>
        <begin position="23"/>
        <end position="926"/>
    </location>
</feature>
<feature type="region of interest" description="Disordered" evidence="2">
    <location>
        <begin position="58"/>
        <end position="99"/>
    </location>
</feature>
<feature type="compositionally biased region" description="Low complexity" evidence="2">
    <location>
        <begin position="68"/>
        <end position="85"/>
    </location>
</feature>
<organism>
    <name type="scientific">Pseudomonas savastanoi pv. phaseolicola (strain 1448A / Race 6)</name>
    <name type="common">Pseudomonas syringae pv. phaseolicola (strain 1448A / Race 6)</name>
    <dbReference type="NCBI Taxonomy" id="264730"/>
    <lineage>
        <taxon>Bacteria</taxon>
        <taxon>Pseudomonadati</taxon>
        <taxon>Pseudomonadota</taxon>
        <taxon>Gammaproteobacteria</taxon>
        <taxon>Pseudomonadales</taxon>
        <taxon>Pseudomonadaceae</taxon>
        <taxon>Pseudomonas</taxon>
    </lineage>
</organism>
<proteinExistence type="inferred from homology"/>
<name>LPTD_PSE14</name>
<sequence>MALKSPAFRKKFPLLVTGSLLAMQPLATQFVVAAEQYDCSVSASGAWNCAPKSNAAAVDLPPRPVHDTTSVSSNGTVTSQSTSSGEQVAGTQLVTEAKGKGLRSRSADYSHLDWVPREKLTAAQLAETGPYCSGAYVEPIRPGMDDKTPMKDAPMFVGAKASRYEQEAQVATLAGDVVLRQGSMQVQAQEAALHQAENRGELNGDVRLRDNGALIVGDKAELQLDTGEARVDNAEYVLHKSNIRGNALYAKRAENAIIRLKDGTYTTCEPNSNAWTLKGNNITLNPATGFGTATNVTLRVKDIPVLYTPYIYFPIDDRRQSGFLPPTIAAGGDNGFTLVTPYYFNLAPNYDATLYPRYMADRGLLMEGEFRYLTKGSEGQFGGAYLNDENDDRKLQSDYDKTRWMINWQHKGGLDTRWLTQVDYTDISDPYYFQDLETDQIGVKRTDFLNQQGSLTYRGDSYAATLNAQAYKLATVANITPYNRLPQLTLNGTLPYNPGGLKFDYQTEAVRFERDLRSGAFIDEDGNSETRLDNNISGLARANGDRLNLAPSVSLPMNWTYGFLTPKLKYVYTQYALDLDSQGKSSLLAGEEYSSSQSRSVPIFSVDSGLYFDRNTNWFGKDYRQTLEPRLFYLYVPEKDQTDIPVFDTSESTFNYASLFRDNRFTGSDRIGDENKLSLGITNRWIEDNGFERQRFSIGQALYFEDRKVQLPGVVFADRDDARANVSPYALEYEYRFNRDWRFNSDFNWDPDSKSTRSGSAMFHYQPEDNPNKIVNLGYRYRNDQIRYDESTGRWIVGGGDYGRPGDANYVKDYYKIQQHDFSVIWPIVPQWSLISRWQYDYNRERTIEAFGGFEYDNCCWKMRLVNRYWVDYDEFSQAAPQNEKGDRGIFLQIVLKGLGGVTGAKVDSFLDKGIQGYREREDQAF</sequence>
<evidence type="ECO:0000255" key="1">
    <source>
        <dbReference type="HAMAP-Rule" id="MF_01411"/>
    </source>
</evidence>
<evidence type="ECO:0000256" key="2">
    <source>
        <dbReference type="SAM" id="MobiDB-lite"/>
    </source>
</evidence>
<evidence type="ECO:0000305" key="3"/>
<keyword id="KW-0998">Cell outer membrane</keyword>
<keyword id="KW-0472">Membrane</keyword>
<keyword id="KW-0732">Signal</keyword>
<dbReference type="EMBL" id="CP000058">
    <property type="protein sequence ID" value="AAZ34876.1"/>
    <property type="status" value="ALT_INIT"/>
    <property type="molecule type" value="Genomic_DNA"/>
</dbReference>
<dbReference type="RefSeq" id="WP_019741166.1">
    <property type="nucleotide sequence ID" value="NC_005773.3"/>
</dbReference>
<dbReference type="SMR" id="Q48NT4"/>
<dbReference type="KEGG" id="psp:PSPPH_0636"/>
<dbReference type="eggNOG" id="COG1452">
    <property type="taxonomic scope" value="Bacteria"/>
</dbReference>
<dbReference type="HOGENOM" id="CLU_009039_1_0_6"/>
<dbReference type="Proteomes" id="UP000000551">
    <property type="component" value="Chromosome"/>
</dbReference>
<dbReference type="GO" id="GO:0009279">
    <property type="term" value="C:cell outer membrane"/>
    <property type="evidence" value="ECO:0007669"/>
    <property type="project" value="UniProtKB-SubCell"/>
</dbReference>
<dbReference type="GO" id="GO:1990351">
    <property type="term" value="C:transporter complex"/>
    <property type="evidence" value="ECO:0007669"/>
    <property type="project" value="TreeGrafter"/>
</dbReference>
<dbReference type="GO" id="GO:0043165">
    <property type="term" value="P:Gram-negative-bacterium-type cell outer membrane assembly"/>
    <property type="evidence" value="ECO:0007669"/>
    <property type="project" value="UniProtKB-UniRule"/>
</dbReference>
<dbReference type="GO" id="GO:0015920">
    <property type="term" value="P:lipopolysaccharide transport"/>
    <property type="evidence" value="ECO:0007669"/>
    <property type="project" value="InterPro"/>
</dbReference>
<dbReference type="Gene3D" id="2.60.450.10">
    <property type="entry name" value="Lipopolysaccharide (LPS) transport protein A like domain"/>
    <property type="match status" value="1"/>
</dbReference>
<dbReference type="HAMAP" id="MF_01411">
    <property type="entry name" value="LPS_assembly_LptD"/>
    <property type="match status" value="1"/>
</dbReference>
<dbReference type="InterPro" id="IPR020889">
    <property type="entry name" value="LipoPS_assembly_LptD"/>
</dbReference>
<dbReference type="InterPro" id="IPR050218">
    <property type="entry name" value="LptD"/>
</dbReference>
<dbReference type="InterPro" id="IPR007543">
    <property type="entry name" value="LptD_C"/>
</dbReference>
<dbReference type="InterPro" id="IPR005653">
    <property type="entry name" value="OstA-like_N"/>
</dbReference>
<dbReference type="PANTHER" id="PTHR30189">
    <property type="entry name" value="LPS-ASSEMBLY PROTEIN"/>
    <property type="match status" value="1"/>
</dbReference>
<dbReference type="PANTHER" id="PTHR30189:SF1">
    <property type="entry name" value="LPS-ASSEMBLY PROTEIN LPTD"/>
    <property type="match status" value="1"/>
</dbReference>
<dbReference type="Pfam" id="PF04453">
    <property type="entry name" value="LptD"/>
    <property type="match status" value="1"/>
</dbReference>
<dbReference type="Pfam" id="PF03968">
    <property type="entry name" value="LptD_N"/>
    <property type="match status" value="1"/>
</dbReference>
<comment type="function">
    <text evidence="1">Together with LptE, is involved in the assembly of lipopolysaccharide (LPS) at the surface of the outer membrane.</text>
</comment>
<comment type="subunit">
    <text evidence="1">Component of the lipopolysaccharide transport and assembly complex. Interacts with LptE and LptA.</text>
</comment>
<comment type="subcellular location">
    <subcellularLocation>
        <location evidence="1">Cell outer membrane</location>
    </subcellularLocation>
</comment>
<comment type="similarity">
    <text evidence="1">Belongs to the LptD family.</text>
</comment>
<comment type="sequence caution" evidence="3">
    <conflict type="erroneous initiation">
        <sequence resource="EMBL-CDS" id="AAZ34876"/>
    </conflict>
</comment>
<accession>Q48NT4</accession>
<protein>
    <recommendedName>
        <fullName evidence="1">LPS-assembly protein LptD</fullName>
    </recommendedName>
</protein>
<gene>
    <name evidence="1" type="primary">lptD</name>
    <name type="synonym">imp</name>
    <name type="synonym">ostA</name>
    <name type="ordered locus">PSPPH_0636</name>
</gene>
<reference key="1">
    <citation type="journal article" date="2005" name="J. Bacteriol.">
        <title>Whole-genome sequence analysis of Pseudomonas syringae pv. phaseolicola 1448A reveals divergence among pathovars in genes involved in virulence and transposition.</title>
        <authorList>
            <person name="Joardar V."/>
            <person name="Lindeberg M."/>
            <person name="Jackson R.W."/>
            <person name="Selengut J."/>
            <person name="Dodson R."/>
            <person name="Brinkac L.M."/>
            <person name="Daugherty S.C."/>
            <person name="DeBoy R.T."/>
            <person name="Durkin A.S."/>
            <person name="Gwinn Giglio M."/>
            <person name="Madupu R."/>
            <person name="Nelson W.C."/>
            <person name="Rosovitz M.J."/>
            <person name="Sullivan S.A."/>
            <person name="Crabtree J."/>
            <person name="Creasy T."/>
            <person name="Davidsen T.M."/>
            <person name="Haft D.H."/>
            <person name="Zafar N."/>
            <person name="Zhou L."/>
            <person name="Halpin R."/>
            <person name="Holley T."/>
            <person name="Khouri H.M."/>
            <person name="Feldblyum T.V."/>
            <person name="White O."/>
            <person name="Fraser C.M."/>
            <person name="Chatterjee A.K."/>
            <person name="Cartinhour S."/>
            <person name="Schneider D."/>
            <person name="Mansfield J.W."/>
            <person name="Collmer A."/>
            <person name="Buell R."/>
        </authorList>
    </citation>
    <scope>NUCLEOTIDE SEQUENCE [LARGE SCALE GENOMIC DNA]</scope>
    <source>
        <strain>1448A / Race 6</strain>
    </source>
</reference>